<protein>
    <recommendedName>
        <fullName evidence="1">Na(+)/H(+) antiporter NhaB</fullName>
    </recommendedName>
    <alternativeName>
        <fullName evidence="1">Sodium/proton antiporter NhaB</fullName>
    </alternativeName>
</protein>
<proteinExistence type="inferred from homology"/>
<sequence>MPATMSQAFIGNFLGNSPKWYKTAILSFLIINPLLFFYVDPFVAGWVLVLEFIFTLAMALKCYPLQPGGLLAIEAVAIGMTSASQVLHEIEANLEVLLLLVFMVAGIYFMKQLLLFGFTKIITKVRSKVLVSLMFCLASAFLSAFLDALTVIAVIIAVAVGFYSIYHKVASGKDFGADHDHTSEGKNAAGEDQLNEEELGAFRGFLRNLLMHAGVGTALGGVCTMVGEPQNLIIAAQANWQFGEFAVRMSPVTVPVLISGILTCYLVEKFGIFGYGAKLPTAVHRILCEYAAHEDARRTNKDNMKLIVQALVGVWLIAGLALHLASVGLIGLSVIILTTAFNGVTDEHALGKAFEEALPFTALLAVFFAVVGVIIDQHLFAPVIQWALGYEGNTQLVIFYIANGLLSMVSDNVFVGTVYINEVKAALINGQITRDQFDLLAVAINTGTNLPSVATPNGQAAFLFLLTSALAPLIRLSYGRMVWMALPYTIVLSIVGVMAIQTGFLEQATQYFYDSHTIIHHSAKEVLGTVSGH</sequence>
<organism>
    <name type="scientific">Shewanella baltica (strain OS155 / ATCC BAA-1091)</name>
    <dbReference type="NCBI Taxonomy" id="325240"/>
    <lineage>
        <taxon>Bacteria</taxon>
        <taxon>Pseudomonadati</taxon>
        <taxon>Pseudomonadota</taxon>
        <taxon>Gammaproteobacteria</taxon>
        <taxon>Alteromonadales</taxon>
        <taxon>Shewanellaceae</taxon>
        <taxon>Shewanella</taxon>
    </lineage>
</organism>
<feature type="chain" id="PRO_0000333124" description="Na(+)/H(+) antiporter NhaB">
    <location>
        <begin position="1"/>
        <end position="533"/>
    </location>
</feature>
<feature type="transmembrane region" description="Helical" evidence="1">
    <location>
        <begin position="28"/>
        <end position="50"/>
    </location>
</feature>
<feature type="transmembrane region" description="Helical" evidence="1">
    <location>
        <begin position="67"/>
        <end position="87"/>
    </location>
</feature>
<feature type="transmembrane region" description="Helical" evidence="1">
    <location>
        <begin position="96"/>
        <end position="116"/>
    </location>
</feature>
<feature type="transmembrane region" description="Helical" evidence="1">
    <location>
        <begin position="131"/>
        <end position="165"/>
    </location>
</feature>
<feature type="transmembrane region" description="Helical" evidence="1">
    <location>
        <begin position="254"/>
        <end position="274"/>
    </location>
</feature>
<feature type="transmembrane region" description="Helical" evidence="1">
    <location>
        <begin position="316"/>
        <end position="336"/>
    </location>
</feature>
<feature type="transmembrane region" description="Helical" evidence="1">
    <location>
        <begin position="364"/>
        <end position="384"/>
    </location>
</feature>
<feature type="transmembrane region" description="Helical" evidence="1">
    <location>
        <begin position="396"/>
        <end position="416"/>
    </location>
</feature>
<feature type="transmembrane region" description="Helical" evidence="1">
    <location>
        <begin position="454"/>
        <end position="474"/>
    </location>
</feature>
<feature type="transmembrane region" description="Helical" evidence="1">
    <location>
        <begin position="481"/>
        <end position="501"/>
    </location>
</feature>
<reference key="1">
    <citation type="submission" date="2007-02" db="EMBL/GenBank/DDBJ databases">
        <title>Complete sequence of chromosome of Shewanella baltica OS155.</title>
        <authorList>
            <consortium name="US DOE Joint Genome Institute"/>
            <person name="Copeland A."/>
            <person name="Lucas S."/>
            <person name="Lapidus A."/>
            <person name="Barry K."/>
            <person name="Detter J.C."/>
            <person name="Glavina del Rio T."/>
            <person name="Hammon N."/>
            <person name="Israni S."/>
            <person name="Dalin E."/>
            <person name="Tice H."/>
            <person name="Pitluck S."/>
            <person name="Sims D.R."/>
            <person name="Brettin T."/>
            <person name="Bruce D."/>
            <person name="Han C."/>
            <person name="Tapia R."/>
            <person name="Brainard J."/>
            <person name="Schmutz J."/>
            <person name="Larimer F."/>
            <person name="Land M."/>
            <person name="Hauser L."/>
            <person name="Kyrpides N."/>
            <person name="Mikhailova N."/>
            <person name="Brettar I."/>
            <person name="Klappenbach J."/>
            <person name="Konstantinidis K."/>
            <person name="Rodrigues J."/>
            <person name="Tiedje J."/>
            <person name="Richardson P."/>
        </authorList>
    </citation>
    <scope>NUCLEOTIDE SEQUENCE [LARGE SCALE GENOMIC DNA]</scope>
    <source>
        <strain>OS155 / ATCC BAA-1091</strain>
    </source>
</reference>
<gene>
    <name evidence="1" type="primary">nhaB</name>
    <name type="ordered locus">Sbal_1777</name>
</gene>
<name>NHAB_SHEB5</name>
<accession>A3D3H1</accession>
<comment type="function">
    <text evidence="1">Na(+)/H(+) antiporter that extrudes sodium in exchange for external protons.</text>
</comment>
<comment type="catalytic activity">
    <reaction evidence="1">
        <text>2 Na(+)(in) + 3 H(+)(out) = 2 Na(+)(out) + 3 H(+)(in)</text>
        <dbReference type="Rhea" id="RHEA:29247"/>
        <dbReference type="ChEBI" id="CHEBI:15378"/>
        <dbReference type="ChEBI" id="CHEBI:29101"/>
    </reaction>
    <physiologicalReaction direction="left-to-right" evidence="1">
        <dbReference type="Rhea" id="RHEA:29248"/>
    </physiologicalReaction>
</comment>
<comment type="subcellular location">
    <subcellularLocation>
        <location evidence="1">Cell inner membrane</location>
        <topology evidence="1">Multi-pass membrane protein</topology>
    </subcellularLocation>
</comment>
<comment type="similarity">
    <text evidence="1">Belongs to the NhaB Na(+)/H(+) (TC 2.A.34) antiporter family.</text>
</comment>
<dbReference type="EMBL" id="CP000563">
    <property type="protein sequence ID" value="ABN61284.1"/>
    <property type="molecule type" value="Genomic_DNA"/>
</dbReference>
<dbReference type="RefSeq" id="WP_006081283.1">
    <property type="nucleotide sequence ID" value="NC_009052.1"/>
</dbReference>
<dbReference type="SMR" id="A3D3H1"/>
<dbReference type="STRING" id="325240.Sbal_1777"/>
<dbReference type="GeneID" id="11772033"/>
<dbReference type="KEGG" id="sbl:Sbal_1777"/>
<dbReference type="HOGENOM" id="CLU_041110_0_0_6"/>
<dbReference type="OrthoDB" id="5288732at2"/>
<dbReference type="Proteomes" id="UP000001557">
    <property type="component" value="Chromosome"/>
</dbReference>
<dbReference type="GO" id="GO:0005886">
    <property type="term" value="C:plasma membrane"/>
    <property type="evidence" value="ECO:0007669"/>
    <property type="project" value="UniProtKB-SubCell"/>
</dbReference>
<dbReference type="GO" id="GO:0015385">
    <property type="term" value="F:sodium:proton antiporter activity"/>
    <property type="evidence" value="ECO:0007669"/>
    <property type="project" value="InterPro"/>
</dbReference>
<dbReference type="HAMAP" id="MF_01599">
    <property type="entry name" value="NhaB"/>
    <property type="match status" value="1"/>
</dbReference>
<dbReference type="InterPro" id="IPR004671">
    <property type="entry name" value="Na+/H+_antiporter_NhaB"/>
</dbReference>
<dbReference type="NCBIfam" id="TIGR00774">
    <property type="entry name" value="NhaB"/>
    <property type="match status" value="1"/>
</dbReference>
<dbReference type="NCBIfam" id="NF007093">
    <property type="entry name" value="PRK09547.1"/>
    <property type="match status" value="1"/>
</dbReference>
<dbReference type="PANTHER" id="PTHR43302:SF1">
    <property type="entry name" value="NA(+)_H(+) ANTIPORTER NHAB"/>
    <property type="match status" value="1"/>
</dbReference>
<dbReference type="PANTHER" id="PTHR43302">
    <property type="entry name" value="TRANSPORTER ARSB-RELATED"/>
    <property type="match status" value="1"/>
</dbReference>
<dbReference type="Pfam" id="PF06450">
    <property type="entry name" value="NhaB"/>
    <property type="match status" value="1"/>
</dbReference>
<evidence type="ECO:0000255" key="1">
    <source>
        <dbReference type="HAMAP-Rule" id="MF_01599"/>
    </source>
</evidence>
<keyword id="KW-0050">Antiport</keyword>
<keyword id="KW-0997">Cell inner membrane</keyword>
<keyword id="KW-1003">Cell membrane</keyword>
<keyword id="KW-0406">Ion transport</keyword>
<keyword id="KW-0472">Membrane</keyword>
<keyword id="KW-1185">Reference proteome</keyword>
<keyword id="KW-0915">Sodium</keyword>
<keyword id="KW-0739">Sodium transport</keyword>
<keyword id="KW-0812">Transmembrane</keyword>
<keyword id="KW-1133">Transmembrane helix</keyword>
<keyword id="KW-0813">Transport</keyword>